<comment type="function">
    <text evidence="1">Required for the formation of a threonylcarbamoyl group on adenosine at position 37 (t(6)A37) in tRNAs that read codons beginning with adenine. Catalyzes the conversion of L-threonine, HCO(3)(-)/CO(2) and ATP to give threonylcarbamoyl-AMP (TC-AMP) as the acyladenylate intermediate, with the release of diphosphate.</text>
</comment>
<comment type="catalytic activity">
    <reaction evidence="1">
        <text>L-threonine + hydrogencarbonate + ATP = L-threonylcarbamoyladenylate + diphosphate + H2O</text>
        <dbReference type="Rhea" id="RHEA:36407"/>
        <dbReference type="ChEBI" id="CHEBI:15377"/>
        <dbReference type="ChEBI" id="CHEBI:17544"/>
        <dbReference type="ChEBI" id="CHEBI:30616"/>
        <dbReference type="ChEBI" id="CHEBI:33019"/>
        <dbReference type="ChEBI" id="CHEBI:57926"/>
        <dbReference type="ChEBI" id="CHEBI:73682"/>
        <dbReference type="EC" id="2.7.7.87"/>
    </reaction>
</comment>
<comment type="subcellular location">
    <subcellularLocation>
        <location evidence="1">Cytoplasm</location>
    </subcellularLocation>
</comment>
<comment type="similarity">
    <text evidence="1">Belongs to the SUA5 family. TsaC subfamily.</text>
</comment>
<protein>
    <recommendedName>
        <fullName evidence="1">Threonylcarbamoyl-AMP synthase</fullName>
        <shortName evidence="1">TC-AMP synthase</shortName>
        <ecNumber evidence="1">2.7.7.87</ecNumber>
    </recommendedName>
    <alternativeName>
        <fullName evidence="1">L-threonylcarbamoyladenylate synthase</fullName>
    </alternativeName>
    <alternativeName>
        <fullName evidence="1">t(6)A37 threonylcarbamoyladenosine biosynthesis protein TsaC</fullName>
    </alternativeName>
    <alternativeName>
        <fullName evidence="1">tRNA threonylcarbamoyladenosine biosynthesis protein TsaC</fullName>
    </alternativeName>
</protein>
<gene>
    <name evidence="1" type="primary">tsaC</name>
    <name type="synonym">rimN</name>
    <name type="ordered locus">PA14_00240</name>
</gene>
<feature type="chain" id="PRO_0000352950" description="Threonylcarbamoyl-AMP synthase">
    <location>
        <begin position="1"/>
        <end position="185"/>
    </location>
</feature>
<feature type="domain" description="YrdC-like" evidence="1">
    <location>
        <begin position="4"/>
        <end position="185"/>
    </location>
</feature>
<organism>
    <name type="scientific">Pseudomonas aeruginosa (strain UCBPP-PA14)</name>
    <dbReference type="NCBI Taxonomy" id="208963"/>
    <lineage>
        <taxon>Bacteria</taxon>
        <taxon>Pseudomonadati</taxon>
        <taxon>Pseudomonadota</taxon>
        <taxon>Gammaproteobacteria</taxon>
        <taxon>Pseudomonadales</taxon>
        <taxon>Pseudomonadaceae</taxon>
        <taxon>Pseudomonas</taxon>
    </lineage>
</organism>
<name>TSAC_PSEAB</name>
<proteinExistence type="inferred from homology"/>
<dbReference type="EC" id="2.7.7.87" evidence="1"/>
<dbReference type="EMBL" id="CP000438">
    <property type="protein sequence ID" value="ABJ14978.1"/>
    <property type="molecule type" value="Genomic_DNA"/>
</dbReference>
<dbReference type="RefSeq" id="WP_003097300.1">
    <property type="nucleotide sequence ID" value="NZ_CP034244.1"/>
</dbReference>
<dbReference type="SMR" id="Q02V59"/>
<dbReference type="KEGG" id="pau:PA14_00240"/>
<dbReference type="PseudoCAP" id="PA14_00240"/>
<dbReference type="HOGENOM" id="CLU_031397_6_0_6"/>
<dbReference type="BioCyc" id="PAER208963:G1G74-22-MONOMER"/>
<dbReference type="Proteomes" id="UP000000653">
    <property type="component" value="Chromosome"/>
</dbReference>
<dbReference type="GO" id="GO:0005737">
    <property type="term" value="C:cytoplasm"/>
    <property type="evidence" value="ECO:0007669"/>
    <property type="project" value="UniProtKB-SubCell"/>
</dbReference>
<dbReference type="GO" id="GO:0005524">
    <property type="term" value="F:ATP binding"/>
    <property type="evidence" value="ECO:0007669"/>
    <property type="project" value="UniProtKB-UniRule"/>
</dbReference>
<dbReference type="GO" id="GO:0003725">
    <property type="term" value="F:double-stranded RNA binding"/>
    <property type="evidence" value="ECO:0007669"/>
    <property type="project" value="InterPro"/>
</dbReference>
<dbReference type="GO" id="GO:0061710">
    <property type="term" value="F:L-threonylcarbamoyladenylate synthase"/>
    <property type="evidence" value="ECO:0007669"/>
    <property type="project" value="UniProtKB-EC"/>
</dbReference>
<dbReference type="GO" id="GO:0000049">
    <property type="term" value="F:tRNA binding"/>
    <property type="evidence" value="ECO:0007669"/>
    <property type="project" value="TreeGrafter"/>
</dbReference>
<dbReference type="GO" id="GO:0006450">
    <property type="term" value="P:regulation of translational fidelity"/>
    <property type="evidence" value="ECO:0007669"/>
    <property type="project" value="TreeGrafter"/>
</dbReference>
<dbReference type="GO" id="GO:0002949">
    <property type="term" value="P:tRNA threonylcarbamoyladenosine modification"/>
    <property type="evidence" value="ECO:0007669"/>
    <property type="project" value="UniProtKB-UniRule"/>
</dbReference>
<dbReference type="FunFam" id="3.90.870.10:FF:000004">
    <property type="entry name" value="Threonylcarbamoyl-AMP synthase"/>
    <property type="match status" value="1"/>
</dbReference>
<dbReference type="Gene3D" id="3.90.870.10">
    <property type="entry name" value="DHBP synthase"/>
    <property type="match status" value="1"/>
</dbReference>
<dbReference type="HAMAP" id="MF_01852">
    <property type="entry name" value="TsaC"/>
    <property type="match status" value="1"/>
</dbReference>
<dbReference type="InterPro" id="IPR017945">
    <property type="entry name" value="DHBP_synth_RibB-like_a/b_dom"/>
</dbReference>
<dbReference type="InterPro" id="IPR006070">
    <property type="entry name" value="Sua5-like_dom"/>
</dbReference>
<dbReference type="InterPro" id="IPR023535">
    <property type="entry name" value="TC-AMP_synthase"/>
</dbReference>
<dbReference type="InterPro" id="IPR050156">
    <property type="entry name" value="TC-AMP_synthase_SUA5"/>
</dbReference>
<dbReference type="PANTHER" id="PTHR17490">
    <property type="entry name" value="SUA5"/>
    <property type="match status" value="1"/>
</dbReference>
<dbReference type="PANTHER" id="PTHR17490:SF18">
    <property type="entry name" value="THREONYLCARBAMOYL-AMP SYNTHASE"/>
    <property type="match status" value="1"/>
</dbReference>
<dbReference type="Pfam" id="PF01300">
    <property type="entry name" value="Sua5_yciO_yrdC"/>
    <property type="match status" value="1"/>
</dbReference>
<dbReference type="SUPFAM" id="SSF55821">
    <property type="entry name" value="YrdC/RibB"/>
    <property type="match status" value="1"/>
</dbReference>
<dbReference type="PROSITE" id="PS51163">
    <property type="entry name" value="YRDC"/>
    <property type="match status" value="1"/>
</dbReference>
<accession>Q02V59</accession>
<reference key="1">
    <citation type="journal article" date="2006" name="Genome Biol.">
        <title>Genomic analysis reveals that Pseudomonas aeruginosa virulence is combinatorial.</title>
        <authorList>
            <person name="Lee D.G."/>
            <person name="Urbach J.M."/>
            <person name="Wu G."/>
            <person name="Liberati N.T."/>
            <person name="Feinbaum R.L."/>
            <person name="Miyata S."/>
            <person name="Diggins L.T."/>
            <person name="He J."/>
            <person name="Saucier M."/>
            <person name="Deziel E."/>
            <person name="Friedman L."/>
            <person name="Li L."/>
            <person name="Grills G."/>
            <person name="Montgomery K."/>
            <person name="Kucherlapati R."/>
            <person name="Rahme L.G."/>
            <person name="Ausubel F.M."/>
        </authorList>
    </citation>
    <scope>NUCLEOTIDE SEQUENCE [LARGE SCALE GENOMIC DNA]</scope>
    <source>
        <strain>UCBPP-PA14</strain>
    </source>
</reference>
<sequence>MISSFRAQCAARVVREGGVIAYPTEAVWGLGCDPWNEDAVYRLLALKARPVEKGLIVVAANIHQLDFLLEDLPDVWLDRLAGTWPGPNTWLVPHQERLPEWVTGVHDSVAVRVTDHPLVQELCHLTGPLISTSANPAGRPAARTRLRVEQYFHDELDAILGGALGGRRNPSLIRDLVTGQVIRPA</sequence>
<evidence type="ECO:0000255" key="1">
    <source>
        <dbReference type="HAMAP-Rule" id="MF_01852"/>
    </source>
</evidence>
<keyword id="KW-0067">ATP-binding</keyword>
<keyword id="KW-0963">Cytoplasm</keyword>
<keyword id="KW-0547">Nucleotide-binding</keyword>
<keyword id="KW-0548">Nucleotidyltransferase</keyword>
<keyword id="KW-0808">Transferase</keyword>
<keyword id="KW-0819">tRNA processing</keyword>